<gene>
    <name evidence="1" type="primary">rex</name>
    <name type="ordered locus">Tpet_0756</name>
</gene>
<organism>
    <name type="scientific">Thermotoga petrophila (strain ATCC BAA-488 / DSM 13995 / JCM 10881 / RKU-1)</name>
    <dbReference type="NCBI Taxonomy" id="390874"/>
    <lineage>
        <taxon>Bacteria</taxon>
        <taxon>Thermotogati</taxon>
        <taxon>Thermotogota</taxon>
        <taxon>Thermotogae</taxon>
        <taxon>Thermotogales</taxon>
        <taxon>Thermotogaceae</taxon>
        <taxon>Thermotoga</taxon>
    </lineage>
</organism>
<name>REX_THEP1</name>
<reference key="1">
    <citation type="submission" date="2007-05" db="EMBL/GenBank/DDBJ databases">
        <title>Complete sequence of Thermotoga petrophila RKU-1.</title>
        <authorList>
            <consortium name="US DOE Joint Genome Institute"/>
            <person name="Copeland A."/>
            <person name="Lucas S."/>
            <person name="Lapidus A."/>
            <person name="Barry K."/>
            <person name="Glavina del Rio T."/>
            <person name="Dalin E."/>
            <person name="Tice H."/>
            <person name="Pitluck S."/>
            <person name="Sims D."/>
            <person name="Brettin T."/>
            <person name="Bruce D."/>
            <person name="Detter J.C."/>
            <person name="Han C."/>
            <person name="Tapia R."/>
            <person name="Schmutz J."/>
            <person name="Larimer F."/>
            <person name="Land M."/>
            <person name="Hauser L."/>
            <person name="Kyrpides N."/>
            <person name="Mikhailova N."/>
            <person name="Nelson K."/>
            <person name="Gogarten J.P."/>
            <person name="Noll K."/>
            <person name="Richardson P."/>
        </authorList>
    </citation>
    <scope>NUCLEOTIDE SEQUENCE [LARGE SCALE GENOMIC DNA]</scope>
    <source>
        <strain>ATCC BAA-488 / DSM 13995 / JCM 10881 / RKU-1</strain>
    </source>
</reference>
<keyword id="KW-0963">Cytoplasm</keyword>
<keyword id="KW-0238">DNA-binding</keyword>
<keyword id="KW-0520">NAD</keyword>
<keyword id="KW-0678">Repressor</keyword>
<keyword id="KW-0804">Transcription</keyword>
<keyword id="KW-0805">Transcription regulation</keyword>
<protein>
    <recommendedName>
        <fullName evidence="1">Redox-sensing transcriptional repressor Rex</fullName>
    </recommendedName>
</protein>
<comment type="function">
    <text evidence="1">Modulates transcription in response to changes in cellular NADH/NAD(+) redox state.</text>
</comment>
<comment type="subunit">
    <text evidence="1">Homodimer.</text>
</comment>
<comment type="subcellular location">
    <subcellularLocation>
        <location evidence="1">Cytoplasm</location>
    </subcellularLocation>
</comment>
<comment type="similarity">
    <text evidence="1">Belongs to the transcriptional regulatory Rex family.</text>
</comment>
<proteinExistence type="inferred from homology"/>
<evidence type="ECO:0000255" key="1">
    <source>
        <dbReference type="HAMAP-Rule" id="MF_01131"/>
    </source>
</evidence>
<accession>A5IKQ2</accession>
<sequence length="208" mass="22974">MAEKIPKPVSKRLVSYYMCLERLLDEGVEVVSSEELARRLDLKASQIRKDLSYFGEFGKRGVGYNVEHLYDAIGEILGVKKEWKLVVVGAGNIGRAVSNYAVMREKGFKIVGIFDSDPSKMGKEAAPGLTVSDVSELEKFVEEHGVEIGVIAVPAEHAQEIAERLEKAGIMGILNFAPVKIKVSVPVENIDITASLRVLTFEIVRRNN</sequence>
<feature type="chain" id="PRO_1000065427" description="Redox-sensing transcriptional repressor Rex">
    <location>
        <begin position="1"/>
        <end position="208"/>
    </location>
</feature>
<feature type="DNA-binding region" description="H-T-H motif" evidence="1">
    <location>
        <begin position="15"/>
        <end position="54"/>
    </location>
</feature>
<feature type="binding site" evidence="1">
    <location>
        <begin position="89"/>
        <end position="94"/>
    </location>
    <ligand>
        <name>NAD(+)</name>
        <dbReference type="ChEBI" id="CHEBI:57540"/>
    </ligand>
</feature>
<dbReference type="EMBL" id="CP000702">
    <property type="protein sequence ID" value="ABQ46775.1"/>
    <property type="molecule type" value="Genomic_DNA"/>
</dbReference>
<dbReference type="RefSeq" id="WP_011943351.1">
    <property type="nucleotide sequence ID" value="NC_009486.1"/>
</dbReference>
<dbReference type="SMR" id="A5IKQ2"/>
<dbReference type="STRING" id="390874.Tpet_0756"/>
<dbReference type="KEGG" id="tpt:Tpet_0756"/>
<dbReference type="eggNOG" id="COG2344">
    <property type="taxonomic scope" value="Bacteria"/>
</dbReference>
<dbReference type="HOGENOM" id="CLU_061534_1_0_0"/>
<dbReference type="Proteomes" id="UP000006558">
    <property type="component" value="Chromosome"/>
</dbReference>
<dbReference type="GO" id="GO:0005737">
    <property type="term" value="C:cytoplasm"/>
    <property type="evidence" value="ECO:0007669"/>
    <property type="project" value="UniProtKB-SubCell"/>
</dbReference>
<dbReference type="GO" id="GO:0003677">
    <property type="term" value="F:DNA binding"/>
    <property type="evidence" value="ECO:0007669"/>
    <property type="project" value="UniProtKB-UniRule"/>
</dbReference>
<dbReference type="GO" id="GO:0003700">
    <property type="term" value="F:DNA-binding transcription factor activity"/>
    <property type="evidence" value="ECO:0007669"/>
    <property type="project" value="UniProtKB-UniRule"/>
</dbReference>
<dbReference type="GO" id="GO:0045892">
    <property type="term" value="P:negative regulation of DNA-templated transcription"/>
    <property type="evidence" value="ECO:0007669"/>
    <property type="project" value="InterPro"/>
</dbReference>
<dbReference type="GO" id="GO:0051775">
    <property type="term" value="P:response to redox state"/>
    <property type="evidence" value="ECO:0007669"/>
    <property type="project" value="InterPro"/>
</dbReference>
<dbReference type="Gene3D" id="3.40.50.720">
    <property type="entry name" value="NAD(P)-binding Rossmann-like Domain"/>
    <property type="match status" value="1"/>
</dbReference>
<dbReference type="Gene3D" id="1.10.10.10">
    <property type="entry name" value="Winged helix-like DNA-binding domain superfamily/Winged helix DNA-binding domain"/>
    <property type="match status" value="1"/>
</dbReference>
<dbReference type="HAMAP" id="MF_01131">
    <property type="entry name" value="Rex"/>
    <property type="match status" value="1"/>
</dbReference>
<dbReference type="InterPro" id="IPR003781">
    <property type="entry name" value="CoA-bd"/>
</dbReference>
<dbReference type="InterPro" id="IPR036291">
    <property type="entry name" value="NAD(P)-bd_dom_sf"/>
</dbReference>
<dbReference type="InterPro" id="IPR009718">
    <property type="entry name" value="Rex_DNA-bd_C_dom"/>
</dbReference>
<dbReference type="InterPro" id="IPR022876">
    <property type="entry name" value="Tscrpt_rep_Rex"/>
</dbReference>
<dbReference type="InterPro" id="IPR036388">
    <property type="entry name" value="WH-like_DNA-bd_sf"/>
</dbReference>
<dbReference type="InterPro" id="IPR036390">
    <property type="entry name" value="WH_DNA-bd_sf"/>
</dbReference>
<dbReference type="NCBIfam" id="NF003989">
    <property type="entry name" value="PRK05472.1-3"/>
    <property type="match status" value="1"/>
</dbReference>
<dbReference type="NCBIfam" id="NF003993">
    <property type="entry name" value="PRK05472.2-2"/>
    <property type="match status" value="1"/>
</dbReference>
<dbReference type="NCBIfam" id="NF003994">
    <property type="entry name" value="PRK05472.2-3"/>
    <property type="match status" value="1"/>
</dbReference>
<dbReference type="NCBIfam" id="NF003995">
    <property type="entry name" value="PRK05472.2-4"/>
    <property type="match status" value="1"/>
</dbReference>
<dbReference type="NCBIfam" id="NF003996">
    <property type="entry name" value="PRK05472.2-5"/>
    <property type="match status" value="1"/>
</dbReference>
<dbReference type="PANTHER" id="PTHR35786">
    <property type="entry name" value="REDOX-SENSING TRANSCRIPTIONAL REPRESSOR REX"/>
    <property type="match status" value="1"/>
</dbReference>
<dbReference type="PANTHER" id="PTHR35786:SF1">
    <property type="entry name" value="REDOX-SENSING TRANSCRIPTIONAL REPRESSOR REX 1"/>
    <property type="match status" value="1"/>
</dbReference>
<dbReference type="Pfam" id="PF02629">
    <property type="entry name" value="CoA_binding"/>
    <property type="match status" value="1"/>
</dbReference>
<dbReference type="Pfam" id="PF06971">
    <property type="entry name" value="Put_DNA-bind_N"/>
    <property type="match status" value="1"/>
</dbReference>
<dbReference type="SMART" id="SM00881">
    <property type="entry name" value="CoA_binding"/>
    <property type="match status" value="1"/>
</dbReference>
<dbReference type="SUPFAM" id="SSF51735">
    <property type="entry name" value="NAD(P)-binding Rossmann-fold domains"/>
    <property type="match status" value="1"/>
</dbReference>
<dbReference type="SUPFAM" id="SSF46785">
    <property type="entry name" value="Winged helix' DNA-binding domain"/>
    <property type="match status" value="1"/>
</dbReference>